<evidence type="ECO:0000255" key="1">
    <source>
        <dbReference type="HAMAP-Rule" id="MF_00251"/>
    </source>
</evidence>
<evidence type="ECO:0000305" key="2"/>
<organism>
    <name type="scientific">Escherichia coli O9:H4 (strain HS)</name>
    <dbReference type="NCBI Taxonomy" id="331112"/>
    <lineage>
        <taxon>Bacteria</taxon>
        <taxon>Pseudomonadati</taxon>
        <taxon>Pseudomonadota</taxon>
        <taxon>Gammaproteobacteria</taxon>
        <taxon>Enterobacterales</taxon>
        <taxon>Enterobacteriaceae</taxon>
        <taxon>Escherichia</taxon>
    </lineage>
</organism>
<sequence>MKVRASVKKLCRNCKIVKRDGVIRVICSAEPKHKQRQG</sequence>
<name>RL361_ECOHS</name>
<proteinExistence type="inferred from homology"/>
<keyword id="KW-0687">Ribonucleoprotein</keyword>
<keyword id="KW-0689">Ribosomal protein</keyword>
<accession>A8A5A4</accession>
<feature type="chain" id="PRO_0000344680" description="Large ribosomal subunit protein bL36A">
    <location>
        <begin position="1"/>
        <end position="38"/>
    </location>
</feature>
<protein>
    <recommendedName>
        <fullName evidence="1">Large ribosomal subunit protein bL36A</fullName>
    </recommendedName>
    <alternativeName>
        <fullName evidence="2">50S ribosomal protein L36 1</fullName>
    </alternativeName>
</protein>
<dbReference type="EMBL" id="CP000802">
    <property type="protein sequence ID" value="ABV07708.1"/>
    <property type="molecule type" value="Genomic_DNA"/>
</dbReference>
<dbReference type="EMDB" id="EMD-8826"/>
<dbReference type="EMDB" id="EMD-8829"/>
<dbReference type="SMR" id="A8A5A4"/>
<dbReference type="KEGG" id="ecx:EcHS_A3493"/>
<dbReference type="HOGENOM" id="CLU_135723_6_2_6"/>
<dbReference type="GO" id="GO:0005737">
    <property type="term" value="C:cytoplasm"/>
    <property type="evidence" value="ECO:0007669"/>
    <property type="project" value="UniProtKB-ARBA"/>
</dbReference>
<dbReference type="GO" id="GO:1990904">
    <property type="term" value="C:ribonucleoprotein complex"/>
    <property type="evidence" value="ECO:0007669"/>
    <property type="project" value="UniProtKB-KW"/>
</dbReference>
<dbReference type="GO" id="GO:0005840">
    <property type="term" value="C:ribosome"/>
    <property type="evidence" value="ECO:0007669"/>
    <property type="project" value="UniProtKB-KW"/>
</dbReference>
<dbReference type="GO" id="GO:0003735">
    <property type="term" value="F:structural constituent of ribosome"/>
    <property type="evidence" value="ECO:0007669"/>
    <property type="project" value="InterPro"/>
</dbReference>
<dbReference type="GO" id="GO:0006412">
    <property type="term" value="P:translation"/>
    <property type="evidence" value="ECO:0007669"/>
    <property type="project" value="UniProtKB-UniRule"/>
</dbReference>
<dbReference type="HAMAP" id="MF_00251">
    <property type="entry name" value="Ribosomal_bL36"/>
    <property type="match status" value="1"/>
</dbReference>
<dbReference type="InterPro" id="IPR000473">
    <property type="entry name" value="Ribosomal_bL36"/>
</dbReference>
<dbReference type="InterPro" id="IPR035977">
    <property type="entry name" value="Ribosomal_bL36_sp"/>
</dbReference>
<dbReference type="NCBIfam" id="TIGR01022">
    <property type="entry name" value="rpmJ_bact"/>
    <property type="match status" value="1"/>
</dbReference>
<dbReference type="PANTHER" id="PTHR42888">
    <property type="entry name" value="50S RIBOSOMAL PROTEIN L36, CHLOROPLASTIC"/>
    <property type="match status" value="1"/>
</dbReference>
<dbReference type="PANTHER" id="PTHR42888:SF1">
    <property type="entry name" value="LARGE RIBOSOMAL SUBUNIT PROTEIN BL36C"/>
    <property type="match status" value="1"/>
</dbReference>
<dbReference type="Pfam" id="PF00444">
    <property type="entry name" value="Ribosomal_L36"/>
    <property type="match status" value="1"/>
</dbReference>
<dbReference type="SUPFAM" id="SSF57840">
    <property type="entry name" value="Ribosomal protein L36"/>
    <property type="match status" value="1"/>
</dbReference>
<dbReference type="PROSITE" id="PS00828">
    <property type="entry name" value="RIBOSOMAL_L36"/>
    <property type="match status" value="1"/>
</dbReference>
<reference key="1">
    <citation type="journal article" date="2008" name="J. Bacteriol.">
        <title>The pangenome structure of Escherichia coli: comparative genomic analysis of E. coli commensal and pathogenic isolates.</title>
        <authorList>
            <person name="Rasko D.A."/>
            <person name="Rosovitz M.J."/>
            <person name="Myers G.S.A."/>
            <person name="Mongodin E.F."/>
            <person name="Fricke W.F."/>
            <person name="Gajer P."/>
            <person name="Crabtree J."/>
            <person name="Sebaihia M."/>
            <person name="Thomson N.R."/>
            <person name="Chaudhuri R."/>
            <person name="Henderson I.R."/>
            <person name="Sperandio V."/>
            <person name="Ravel J."/>
        </authorList>
    </citation>
    <scope>NUCLEOTIDE SEQUENCE [LARGE SCALE GENOMIC DNA]</scope>
    <source>
        <strain>HS</strain>
    </source>
</reference>
<gene>
    <name evidence="1" type="primary">rpmJ1</name>
    <name type="ordered locus">EcHS_A3493</name>
</gene>
<comment type="similarity">
    <text evidence="1">Belongs to the bacterial ribosomal protein bL36 family.</text>
</comment>